<name>TRUB_BURPS</name>
<reference key="1">
    <citation type="journal article" date="2004" name="Proc. Natl. Acad. Sci. U.S.A.">
        <title>Genomic plasticity of the causative agent of melioidosis, Burkholderia pseudomallei.</title>
        <authorList>
            <person name="Holden M.T.G."/>
            <person name="Titball R.W."/>
            <person name="Peacock S.J."/>
            <person name="Cerdeno-Tarraga A.-M."/>
            <person name="Atkins T."/>
            <person name="Crossman L.C."/>
            <person name="Pitt T."/>
            <person name="Churcher C."/>
            <person name="Mungall K.L."/>
            <person name="Bentley S.D."/>
            <person name="Sebaihia M."/>
            <person name="Thomson N.R."/>
            <person name="Bason N."/>
            <person name="Beacham I.R."/>
            <person name="Brooks K."/>
            <person name="Brown K.A."/>
            <person name="Brown N.F."/>
            <person name="Challis G.L."/>
            <person name="Cherevach I."/>
            <person name="Chillingworth T."/>
            <person name="Cronin A."/>
            <person name="Crossett B."/>
            <person name="Davis P."/>
            <person name="DeShazer D."/>
            <person name="Feltwell T."/>
            <person name="Fraser A."/>
            <person name="Hance Z."/>
            <person name="Hauser H."/>
            <person name="Holroyd S."/>
            <person name="Jagels K."/>
            <person name="Keith K.E."/>
            <person name="Maddison M."/>
            <person name="Moule S."/>
            <person name="Price C."/>
            <person name="Quail M.A."/>
            <person name="Rabbinowitsch E."/>
            <person name="Rutherford K."/>
            <person name="Sanders M."/>
            <person name="Simmonds M."/>
            <person name="Songsivilai S."/>
            <person name="Stevens K."/>
            <person name="Tumapa S."/>
            <person name="Vesaratchavest M."/>
            <person name="Whitehead S."/>
            <person name="Yeats C."/>
            <person name="Barrell B.G."/>
            <person name="Oyston P.C.F."/>
            <person name="Parkhill J."/>
        </authorList>
    </citation>
    <scope>NUCLEOTIDE SEQUENCE [LARGE SCALE GENOMIC DNA]</scope>
    <source>
        <strain>K96243</strain>
    </source>
</reference>
<protein>
    <recommendedName>
        <fullName evidence="1">tRNA pseudouridine synthase B</fullName>
        <ecNumber evidence="1">5.4.99.25</ecNumber>
    </recommendedName>
    <alternativeName>
        <fullName evidence="1">tRNA pseudouridine(55) synthase</fullName>
        <shortName evidence="1">Psi55 synthase</shortName>
    </alternativeName>
    <alternativeName>
        <fullName evidence="1">tRNA pseudouridylate synthase</fullName>
    </alternativeName>
    <alternativeName>
        <fullName evidence="1">tRNA-uridine isomerase</fullName>
    </alternativeName>
</protein>
<evidence type="ECO:0000255" key="1">
    <source>
        <dbReference type="HAMAP-Rule" id="MF_01080"/>
    </source>
</evidence>
<proteinExistence type="inferred from homology"/>
<accession>Q63TQ0</accession>
<sequence>MTTVSPRPRMARRALDGVLLLDKPVGLSSNDALMRAKRLYQAKKAGHTGTLDPLASGLLPLCFGEATKFSQDLLEADKTYEATMRLGVRTTTGDAEGDVLDTRDVSCDEAAVRAALARFVGEIVQVPPMYSALKRDGKPLYEYARAGQTVEREGRTVTIRALALVSCALPDVTFRVTCSKGTYVRTLAEDIGEALGCGAHLTMLRRTGVGPLTLEHAVTLDALDAATQDERDARLAPVDALLSTFPCVKLDAALATRFLHGQRLKLSELAARPDAAEGGRVRVYDADDRLLGVARASEGVLAPERLVVTGA</sequence>
<comment type="function">
    <text evidence="1">Responsible for synthesis of pseudouridine from uracil-55 in the psi GC loop of transfer RNAs.</text>
</comment>
<comment type="catalytic activity">
    <reaction evidence="1">
        <text>uridine(55) in tRNA = pseudouridine(55) in tRNA</text>
        <dbReference type="Rhea" id="RHEA:42532"/>
        <dbReference type="Rhea" id="RHEA-COMP:10101"/>
        <dbReference type="Rhea" id="RHEA-COMP:10102"/>
        <dbReference type="ChEBI" id="CHEBI:65314"/>
        <dbReference type="ChEBI" id="CHEBI:65315"/>
        <dbReference type="EC" id="5.4.99.25"/>
    </reaction>
</comment>
<comment type="similarity">
    <text evidence="1">Belongs to the pseudouridine synthase TruB family. Type 1 subfamily.</text>
</comment>
<keyword id="KW-0413">Isomerase</keyword>
<keyword id="KW-1185">Reference proteome</keyword>
<keyword id="KW-0819">tRNA processing</keyword>
<organism>
    <name type="scientific">Burkholderia pseudomallei (strain K96243)</name>
    <dbReference type="NCBI Taxonomy" id="272560"/>
    <lineage>
        <taxon>Bacteria</taxon>
        <taxon>Pseudomonadati</taxon>
        <taxon>Pseudomonadota</taxon>
        <taxon>Betaproteobacteria</taxon>
        <taxon>Burkholderiales</taxon>
        <taxon>Burkholderiaceae</taxon>
        <taxon>Burkholderia</taxon>
        <taxon>pseudomallei group</taxon>
    </lineage>
</organism>
<feature type="chain" id="PRO_0000121810" description="tRNA pseudouridine synthase B">
    <location>
        <begin position="1"/>
        <end position="311"/>
    </location>
</feature>
<feature type="active site" description="Nucleophile" evidence="1">
    <location>
        <position position="52"/>
    </location>
</feature>
<gene>
    <name evidence="1" type="primary">truB</name>
    <name type="ordered locus">BPSL1916</name>
</gene>
<dbReference type="EC" id="5.4.99.25" evidence="1"/>
<dbReference type="EMBL" id="BX571965">
    <property type="protein sequence ID" value="CAH35916.1"/>
    <property type="molecule type" value="Genomic_DNA"/>
</dbReference>
<dbReference type="RefSeq" id="YP_108516.1">
    <property type="nucleotide sequence ID" value="NC_006350.1"/>
</dbReference>
<dbReference type="SMR" id="Q63TQ0"/>
<dbReference type="STRING" id="272560.BPSL1916"/>
<dbReference type="KEGG" id="bps:BPSL1916"/>
<dbReference type="PATRIC" id="fig|272560.51.peg.4060"/>
<dbReference type="eggNOG" id="COG0130">
    <property type="taxonomic scope" value="Bacteria"/>
</dbReference>
<dbReference type="Proteomes" id="UP000000605">
    <property type="component" value="Chromosome 1"/>
</dbReference>
<dbReference type="GO" id="GO:0003723">
    <property type="term" value="F:RNA binding"/>
    <property type="evidence" value="ECO:0007669"/>
    <property type="project" value="InterPro"/>
</dbReference>
<dbReference type="GO" id="GO:0160148">
    <property type="term" value="F:tRNA pseudouridine(55) synthase activity"/>
    <property type="evidence" value="ECO:0007669"/>
    <property type="project" value="UniProtKB-EC"/>
</dbReference>
<dbReference type="GO" id="GO:1990481">
    <property type="term" value="P:mRNA pseudouridine synthesis"/>
    <property type="evidence" value="ECO:0007669"/>
    <property type="project" value="TreeGrafter"/>
</dbReference>
<dbReference type="GO" id="GO:0031119">
    <property type="term" value="P:tRNA pseudouridine synthesis"/>
    <property type="evidence" value="ECO:0007669"/>
    <property type="project" value="UniProtKB-UniRule"/>
</dbReference>
<dbReference type="CDD" id="cd02573">
    <property type="entry name" value="PseudoU_synth_EcTruB"/>
    <property type="match status" value="1"/>
</dbReference>
<dbReference type="CDD" id="cd21152">
    <property type="entry name" value="PUA_TruB_bacterial"/>
    <property type="match status" value="1"/>
</dbReference>
<dbReference type="FunFam" id="3.30.2350.10:FF:000011">
    <property type="entry name" value="tRNA pseudouridine synthase B"/>
    <property type="match status" value="1"/>
</dbReference>
<dbReference type="Gene3D" id="3.30.2350.10">
    <property type="entry name" value="Pseudouridine synthase"/>
    <property type="match status" value="1"/>
</dbReference>
<dbReference type="Gene3D" id="2.30.130.10">
    <property type="entry name" value="PUA domain"/>
    <property type="match status" value="1"/>
</dbReference>
<dbReference type="HAMAP" id="MF_01080">
    <property type="entry name" value="TruB_bact"/>
    <property type="match status" value="1"/>
</dbReference>
<dbReference type="InterPro" id="IPR020103">
    <property type="entry name" value="PsdUridine_synth_cat_dom_sf"/>
</dbReference>
<dbReference type="InterPro" id="IPR002501">
    <property type="entry name" value="PsdUridine_synth_N"/>
</dbReference>
<dbReference type="InterPro" id="IPR015947">
    <property type="entry name" value="PUA-like_sf"/>
</dbReference>
<dbReference type="InterPro" id="IPR036974">
    <property type="entry name" value="PUA_sf"/>
</dbReference>
<dbReference type="InterPro" id="IPR014780">
    <property type="entry name" value="tRNA_psdUridine_synth_TruB"/>
</dbReference>
<dbReference type="InterPro" id="IPR015240">
    <property type="entry name" value="tRNA_sdUridine_synth_fam1_C"/>
</dbReference>
<dbReference type="InterPro" id="IPR032819">
    <property type="entry name" value="TruB_C"/>
</dbReference>
<dbReference type="NCBIfam" id="TIGR00431">
    <property type="entry name" value="TruB"/>
    <property type="match status" value="1"/>
</dbReference>
<dbReference type="PANTHER" id="PTHR13767:SF2">
    <property type="entry name" value="PSEUDOURIDYLATE SYNTHASE TRUB1"/>
    <property type="match status" value="1"/>
</dbReference>
<dbReference type="PANTHER" id="PTHR13767">
    <property type="entry name" value="TRNA-PSEUDOURIDINE SYNTHASE"/>
    <property type="match status" value="1"/>
</dbReference>
<dbReference type="Pfam" id="PF09157">
    <property type="entry name" value="TruB-C_2"/>
    <property type="match status" value="1"/>
</dbReference>
<dbReference type="Pfam" id="PF16198">
    <property type="entry name" value="TruB_C_2"/>
    <property type="match status" value="1"/>
</dbReference>
<dbReference type="Pfam" id="PF01509">
    <property type="entry name" value="TruB_N"/>
    <property type="match status" value="1"/>
</dbReference>
<dbReference type="SUPFAM" id="SSF55120">
    <property type="entry name" value="Pseudouridine synthase"/>
    <property type="match status" value="1"/>
</dbReference>
<dbReference type="SUPFAM" id="SSF88697">
    <property type="entry name" value="PUA domain-like"/>
    <property type="match status" value="1"/>
</dbReference>